<sequence length="532" mass="56345">MAAKDVLFANDARQKMLKGVNLLADAVKVTLGPKGRNVVLDKSYGAPTITKDGVSVAKEIELKDKFENMGAQMVKQVASKANDEAGDGTTTATVLAQSFINEGLKAVASGMNPMDLKRGIDKATEAAVEKLREMSKPCSDKESITQVGSISANSDRAIGEIIAEAMEKVGRNGVITVEEGQGLDNELSVVEGMQFDRGYLSPYFITNQENGSVELDNPYILLVDKKVSSIRELLPVLEEVAKSSRSLLIIAEDIEGEALATLVVNNMRGIVRATAVKAPGFGDNRKAMMEDIAVLTAGTVISEEIGLELEKATLEQLGSAKKVTITKDTTTIVGGAAEASAIADRVASIEKQIETTTSQYDKDKLQQRVAKLSGGVAVIKIGAATEVEMKEKKDRVDDALHATRAAVEEGIVAGGGVALTKIAKELADLKGDNDDQNVGIRVALRAMEEPLRQIATNAGDEASVVANAVKAGDADYGYNAATGEYGNMIEMGILDPAKVTRSALQFAASVAGLMITTEAMITNHVEDKELDI</sequence>
<keyword id="KW-0067">ATP-binding</keyword>
<keyword id="KW-0143">Chaperone</keyword>
<keyword id="KW-0963">Cytoplasm</keyword>
<keyword id="KW-0413">Isomerase</keyword>
<keyword id="KW-0547">Nucleotide-binding</keyword>
<proteinExistence type="inferred from homology"/>
<protein>
    <recommendedName>
        <fullName evidence="1">Chaperonin GroEL 2</fullName>
        <ecNumber evidence="1">5.6.1.7</ecNumber>
    </recommendedName>
    <alternativeName>
        <fullName evidence="1">60 kDa chaperonin 2</fullName>
    </alternativeName>
    <alternativeName>
        <fullName evidence="1">Chaperonin-60 2</fullName>
        <shortName evidence="1">Cpn60 2</shortName>
    </alternativeName>
</protein>
<reference key="1">
    <citation type="journal article" date="2003" name="Lancet">
        <title>Genome sequence of Vibrio parahaemolyticus: a pathogenic mechanism distinct from that of V. cholerae.</title>
        <authorList>
            <person name="Makino K."/>
            <person name="Oshima K."/>
            <person name="Kurokawa K."/>
            <person name="Yokoyama K."/>
            <person name="Uda T."/>
            <person name="Tagomori K."/>
            <person name="Iijima Y."/>
            <person name="Najima M."/>
            <person name="Nakano M."/>
            <person name="Yamashita A."/>
            <person name="Kubota Y."/>
            <person name="Kimura S."/>
            <person name="Yasunaga T."/>
            <person name="Honda T."/>
            <person name="Shinagawa H."/>
            <person name="Hattori M."/>
            <person name="Iida T."/>
        </authorList>
    </citation>
    <scope>NUCLEOTIDE SEQUENCE [LARGE SCALE GENOMIC DNA]</scope>
    <source>
        <strain>RIMD 2210633</strain>
    </source>
</reference>
<accession>Q87JG6</accession>
<dbReference type="EC" id="5.6.1.7" evidence="1"/>
<dbReference type="EMBL" id="BA000032">
    <property type="protein sequence ID" value="BAC61630.1"/>
    <property type="molecule type" value="Genomic_DNA"/>
</dbReference>
<dbReference type="RefSeq" id="NP_799797.1">
    <property type="nucleotide sequence ID" value="NC_004605.1"/>
</dbReference>
<dbReference type="SMR" id="Q87JG6"/>
<dbReference type="GeneID" id="1190975"/>
<dbReference type="KEGG" id="vpa:VPA0287"/>
<dbReference type="PATRIC" id="fig|223926.6.peg.3239"/>
<dbReference type="eggNOG" id="COG0459">
    <property type="taxonomic scope" value="Bacteria"/>
</dbReference>
<dbReference type="HOGENOM" id="CLU_016503_3_0_6"/>
<dbReference type="Proteomes" id="UP000002493">
    <property type="component" value="Chromosome 2"/>
</dbReference>
<dbReference type="GO" id="GO:0005737">
    <property type="term" value="C:cytoplasm"/>
    <property type="evidence" value="ECO:0007669"/>
    <property type="project" value="UniProtKB-SubCell"/>
</dbReference>
<dbReference type="GO" id="GO:0005524">
    <property type="term" value="F:ATP binding"/>
    <property type="evidence" value="ECO:0007669"/>
    <property type="project" value="UniProtKB-UniRule"/>
</dbReference>
<dbReference type="GO" id="GO:0140662">
    <property type="term" value="F:ATP-dependent protein folding chaperone"/>
    <property type="evidence" value="ECO:0007669"/>
    <property type="project" value="InterPro"/>
</dbReference>
<dbReference type="GO" id="GO:0016853">
    <property type="term" value="F:isomerase activity"/>
    <property type="evidence" value="ECO:0007669"/>
    <property type="project" value="UniProtKB-KW"/>
</dbReference>
<dbReference type="GO" id="GO:0051082">
    <property type="term" value="F:unfolded protein binding"/>
    <property type="evidence" value="ECO:0007669"/>
    <property type="project" value="UniProtKB-UniRule"/>
</dbReference>
<dbReference type="GO" id="GO:0042026">
    <property type="term" value="P:protein refolding"/>
    <property type="evidence" value="ECO:0007669"/>
    <property type="project" value="UniProtKB-UniRule"/>
</dbReference>
<dbReference type="CDD" id="cd03344">
    <property type="entry name" value="GroEL"/>
    <property type="match status" value="1"/>
</dbReference>
<dbReference type="FunFam" id="1.10.560.10:FF:000001">
    <property type="entry name" value="60 kDa chaperonin"/>
    <property type="match status" value="1"/>
</dbReference>
<dbReference type="FunFam" id="3.50.7.10:FF:000001">
    <property type="entry name" value="60 kDa chaperonin"/>
    <property type="match status" value="1"/>
</dbReference>
<dbReference type="Gene3D" id="3.50.7.10">
    <property type="entry name" value="GroEL"/>
    <property type="match status" value="1"/>
</dbReference>
<dbReference type="Gene3D" id="1.10.560.10">
    <property type="entry name" value="GroEL-like equatorial domain"/>
    <property type="match status" value="1"/>
</dbReference>
<dbReference type="Gene3D" id="3.30.260.10">
    <property type="entry name" value="TCP-1-like chaperonin intermediate domain"/>
    <property type="match status" value="1"/>
</dbReference>
<dbReference type="HAMAP" id="MF_00600">
    <property type="entry name" value="CH60"/>
    <property type="match status" value="1"/>
</dbReference>
<dbReference type="InterPro" id="IPR018370">
    <property type="entry name" value="Chaperonin_Cpn60_CS"/>
</dbReference>
<dbReference type="InterPro" id="IPR001844">
    <property type="entry name" value="Cpn60/GroEL"/>
</dbReference>
<dbReference type="InterPro" id="IPR002423">
    <property type="entry name" value="Cpn60/GroEL/TCP-1"/>
</dbReference>
<dbReference type="InterPro" id="IPR027409">
    <property type="entry name" value="GroEL-like_apical_dom_sf"/>
</dbReference>
<dbReference type="InterPro" id="IPR027413">
    <property type="entry name" value="GROEL-like_equatorial_sf"/>
</dbReference>
<dbReference type="InterPro" id="IPR027410">
    <property type="entry name" value="TCP-1-like_intermed_sf"/>
</dbReference>
<dbReference type="NCBIfam" id="TIGR02348">
    <property type="entry name" value="GroEL"/>
    <property type="match status" value="1"/>
</dbReference>
<dbReference type="NCBIfam" id="NF000592">
    <property type="entry name" value="PRK00013.1"/>
    <property type="match status" value="1"/>
</dbReference>
<dbReference type="NCBIfam" id="NF009487">
    <property type="entry name" value="PRK12849.1"/>
    <property type="match status" value="1"/>
</dbReference>
<dbReference type="NCBIfam" id="NF009488">
    <property type="entry name" value="PRK12850.1"/>
    <property type="match status" value="1"/>
</dbReference>
<dbReference type="NCBIfam" id="NF009489">
    <property type="entry name" value="PRK12851.1"/>
    <property type="match status" value="1"/>
</dbReference>
<dbReference type="PANTHER" id="PTHR45633">
    <property type="entry name" value="60 KDA HEAT SHOCK PROTEIN, MITOCHONDRIAL"/>
    <property type="match status" value="1"/>
</dbReference>
<dbReference type="Pfam" id="PF00118">
    <property type="entry name" value="Cpn60_TCP1"/>
    <property type="match status" value="1"/>
</dbReference>
<dbReference type="PRINTS" id="PR00298">
    <property type="entry name" value="CHAPERONIN60"/>
</dbReference>
<dbReference type="SUPFAM" id="SSF52029">
    <property type="entry name" value="GroEL apical domain-like"/>
    <property type="match status" value="1"/>
</dbReference>
<dbReference type="SUPFAM" id="SSF48592">
    <property type="entry name" value="GroEL equatorial domain-like"/>
    <property type="match status" value="1"/>
</dbReference>
<dbReference type="SUPFAM" id="SSF54849">
    <property type="entry name" value="GroEL-intermediate domain like"/>
    <property type="match status" value="1"/>
</dbReference>
<dbReference type="PROSITE" id="PS00296">
    <property type="entry name" value="CHAPERONINS_CPN60"/>
    <property type="match status" value="1"/>
</dbReference>
<name>CH602_VIBPA</name>
<organism>
    <name type="scientific">Vibrio parahaemolyticus serotype O3:K6 (strain RIMD 2210633)</name>
    <dbReference type="NCBI Taxonomy" id="223926"/>
    <lineage>
        <taxon>Bacteria</taxon>
        <taxon>Pseudomonadati</taxon>
        <taxon>Pseudomonadota</taxon>
        <taxon>Gammaproteobacteria</taxon>
        <taxon>Vibrionales</taxon>
        <taxon>Vibrionaceae</taxon>
        <taxon>Vibrio</taxon>
    </lineage>
</organism>
<comment type="function">
    <text evidence="1">Together with its co-chaperonin GroES, plays an essential role in assisting protein folding. The GroEL-GroES system forms a nano-cage that allows encapsulation of the non-native substrate proteins and provides a physical environment optimized to promote and accelerate protein folding.</text>
</comment>
<comment type="catalytic activity">
    <reaction evidence="1">
        <text>ATP + H2O + a folded polypeptide = ADP + phosphate + an unfolded polypeptide.</text>
        <dbReference type="EC" id="5.6.1.7"/>
    </reaction>
</comment>
<comment type="subunit">
    <text evidence="1">Forms a cylinder of 14 subunits composed of two heptameric rings stacked back-to-back. Interacts with the co-chaperonin GroES.</text>
</comment>
<comment type="subcellular location">
    <subcellularLocation>
        <location evidence="1">Cytoplasm</location>
    </subcellularLocation>
</comment>
<comment type="similarity">
    <text evidence="1">Belongs to the chaperonin (HSP60) family.</text>
</comment>
<gene>
    <name evidence="1" type="primary">groEL2</name>
    <name evidence="1" type="synonym">groL2</name>
    <name type="ordered locus">VPA0287</name>
</gene>
<feature type="chain" id="PRO_0000063598" description="Chaperonin GroEL 2">
    <location>
        <begin position="1"/>
        <end position="532"/>
    </location>
</feature>
<feature type="binding site" evidence="1">
    <location>
        <begin position="30"/>
        <end position="33"/>
    </location>
    <ligand>
        <name>ATP</name>
        <dbReference type="ChEBI" id="CHEBI:30616"/>
    </ligand>
</feature>
<feature type="binding site" evidence="1">
    <location>
        <position position="51"/>
    </location>
    <ligand>
        <name>ATP</name>
        <dbReference type="ChEBI" id="CHEBI:30616"/>
    </ligand>
</feature>
<feature type="binding site" evidence="1">
    <location>
        <begin position="87"/>
        <end position="91"/>
    </location>
    <ligand>
        <name>ATP</name>
        <dbReference type="ChEBI" id="CHEBI:30616"/>
    </ligand>
</feature>
<feature type="binding site" evidence="1">
    <location>
        <position position="415"/>
    </location>
    <ligand>
        <name>ATP</name>
        <dbReference type="ChEBI" id="CHEBI:30616"/>
    </ligand>
</feature>
<feature type="binding site" evidence="1">
    <location>
        <begin position="479"/>
        <end position="481"/>
    </location>
    <ligand>
        <name>ATP</name>
        <dbReference type="ChEBI" id="CHEBI:30616"/>
    </ligand>
</feature>
<feature type="binding site" evidence="1">
    <location>
        <position position="495"/>
    </location>
    <ligand>
        <name>ATP</name>
        <dbReference type="ChEBI" id="CHEBI:30616"/>
    </ligand>
</feature>
<evidence type="ECO:0000255" key="1">
    <source>
        <dbReference type="HAMAP-Rule" id="MF_00600"/>
    </source>
</evidence>